<gene>
    <name evidence="1" type="primary">dut</name>
    <name type="ordered locus">AF_1108</name>
</gene>
<comment type="function">
    <text evidence="1">This enzyme is involved in nucleotide metabolism: it produces dUMP, the immediate precursor of thymidine nucleotides and it decreases the intracellular concentration of dUTP so that uracil cannot be incorporated into DNA.</text>
</comment>
<comment type="catalytic activity">
    <reaction evidence="1">
        <text>dUTP + H2O = dUMP + diphosphate + H(+)</text>
        <dbReference type="Rhea" id="RHEA:10248"/>
        <dbReference type="ChEBI" id="CHEBI:15377"/>
        <dbReference type="ChEBI" id="CHEBI:15378"/>
        <dbReference type="ChEBI" id="CHEBI:33019"/>
        <dbReference type="ChEBI" id="CHEBI:61555"/>
        <dbReference type="ChEBI" id="CHEBI:246422"/>
        <dbReference type="EC" id="3.6.1.23"/>
    </reaction>
</comment>
<comment type="pathway">
    <text evidence="1">Pyrimidine metabolism; dUMP biosynthesis; dUMP from dCTP (dUTP route): step 2/2.</text>
</comment>
<comment type="similarity">
    <text evidence="1">Belongs to the dCTP deaminase family. Archaeal dUTPase subfamily.</text>
</comment>
<reference key="1">
    <citation type="journal article" date="1997" name="Nature">
        <title>The complete genome sequence of the hyperthermophilic, sulphate-reducing archaeon Archaeoglobus fulgidus.</title>
        <authorList>
            <person name="Klenk H.-P."/>
            <person name="Clayton R.A."/>
            <person name="Tomb J.-F."/>
            <person name="White O."/>
            <person name="Nelson K.E."/>
            <person name="Ketchum K.A."/>
            <person name="Dodson R.J."/>
            <person name="Gwinn M.L."/>
            <person name="Hickey E.K."/>
            <person name="Peterson J.D."/>
            <person name="Richardson D.L."/>
            <person name="Kerlavage A.R."/>
            <person name="Graham D.E."/>
            <person name="Kyrpides N.C."/>
            <person name="Fleischmann R.D."/>
            <person name="Quackenbush J."/>
            <person name="Lee N.H."/>
            <person name="Sutton G.G."/>
            <person name="Gill S.R."/>
            <person name="Kirkness E.F."/>
            <person name="Dougherty B.A."/>
            <person name="McKenney K."/>
            <person name="Adams M.D."/>
            <person name="Loftus B.J."/>
            <person name="Peterson S.N."/>
            <person name="Reich C.I."/>
            <person name="McNeil L.K."/>
            <person name="Badger J.H."/>
            <person name="Glodek A."/>
            <person name="Zhou L."/>
            <person name="Overbeek R."/>
            <person name="Gocayne J.D."/>
            <person name="Weidman J.F."/>
            <person name="McDonald L.A."/>
            <person name="Utterback T.R."/>
            <person name="Cotton M.D."/>
            <person name="Spriggs T."/>
            <person name="Artiach P."/>
            <person name="Kaine B.P."/>
            <person name="Sykes S.M."/>
            <person name="Sadow P.W."/>
            <person name="D'Andrea K.P."/>
            <person name="Bowman C."/>
            <person name="Fujii C."/>
            <person name="Garland S.A."/>
            <person name="Mason T.M."/>
            <person name="Olsen G.J."/>
            <person name="Fraser C.M."/>
            <person name="Smith H.O."/>
            <person name="Woese C.R."/>
            <person name="Venter J.C."/>
        </authorList>
    </citation>
    <scope>NUCLEOTIDE SEQUENCE [LARGE SCALE GENOMIC DNA]</scope>
    <source>
        <strain>ATCC 49558 / DSM 4304 / JCM 9628 / NBRC 100126 / VC-16</strain>
    </source>
</reference>
<protein>
    <recommendedName>
        <fullName evidence="1">Probable deoxyuridine 5'-triphosphate nucleotidohydrolase</fullName>
        <shortName evidence="1">dUTPase</shortName>
        <ecNumber evidence="1">3.6.1.23</ecNumber>
    </recommendedName>
    <alternativeName>
        <fullName evidence="1">dUTP pyrophosphatase</fullName>
    </alternativeName>
</protein>
<sequence length="168" mass="19227">MAVLSGDEIRKLIQKEGLIRDYVDLETQIQPNGFDCTLRSVYRLRGCGRVDFDNSRRELPELEEVEFRDWVYLPKGVYRAKLNEVVRLGNDIMAIARPRSTLIRCGANVLTAVWDAGYEGRSEVSIVVHNDYGIWLSRNARIIQLVFIRLSSPTKGYEGVYKGENIDS</sequence>
<keyword id="KW-0378">Hydrolase</keyword>
<keyword id="KW-0546">Nucleotide metabolism</keyword>
<keyword id="KW-1185">Reference proteome</keyword>
<proteinExistence type="inferred from homology"/>
<accession>O29157</accession>
<dbReference type="EC" id="3.6.1.23" evidence="1"/>
<dbReference type="EMBL" id="AE000782">
    <property type="protein sequence ID" value="AAB90130.1"/>
    <property type="molecule type" value="Genomic_DNA"/>
</dbReference>
<dbReference type="PIR" id="C69388">
    <property type="entry name" value="C69388"/>
</dbReference>
<dbReference type="RefSeq" id="WP_010878604.1">
    <property type="nucleotide sequence ID" value="NC_000917.1"/>
</dbReference>
<dbReference type="SMR" id="O29157"/>
<dbReference type="STRING" id="224325.AF_1108"/>
<dbReference type="PaxDb" id="224325-AF_1108"/>
<dbReference type="EnsemblBacteria" id="AAB90130">
    <property type="protein sequence ID" value="AAB90130"/>
    <property type="gene ID" value="AF_1108"/>
</dbReference>
<dbReference type="KEGG" id="afu:AF_1108"/>
<dbReference type="eggNOG" id="arCOG04048">
    <property type="taxonomic scope" value="Archaea"/>
</dbReference>
<dbReference type="HOGENOM" id="CLU_103451_2_0_2"/>
<dbReference type="OrthoDB" id="50042at2157"/>
<dbReference type="PhylomeDB" id="O29157"/>
<dbReference type="UniPathway" id="UPA00610">
    <property type="reaction ID" value="UER00666"/>
</dbReference>
<dbReference type="Proteomes" id="UP000002199">
    <property type="component" value="Chromosome"/>
</dbReference>
<dbReference type="GO" id="GO:0008829">
    <property type="term" value="F:dCTP deaminase activity"/>
    <property type="evidence" value="ECO:0007669"/>
    <property type="project" value="InterPro"/>
</dbReference>
<dbReference type="GO" id="GO:0004170">
    <property type="term" value="F:dUTP diphosphatase activity"/>
    <property type="evidence" value="ECO:0007669"/>
    <property type="project" value="UniProtKB-UniRule"/>
</dbReference>
<dbReference type="GO" id="GO:0006226">
    <property type="term" value="P:dUMP biosynthetic process"/>
    <property type="evidence" value="ECO:0007669"/>
    <property type="project" value="UniProtKB-UniRule"/>
</dbReference>
<dbReference type="GO" id="GO:0006229">
    <property type="term" value="P:dUTP biosynthetic process"/>
    <property type="evidence" value="ECO:0007669"/>
    <property type="project" value="InterPro"/>
</dbReference>
<dbReference type="CDD" id="cd07557">
    <property type="entry name" value="trimeric_dUTPase"/>
    <property type="match status" value="1"/>
</dbReference>
<dbReference type="Gene3D" id="2.70.40.10">
    <property type="match status" value="1"/>
</dbReference>
<dbReference type="HAMAP" id="MF_00635">
    <property type="entry name" value="dUTPase_arch"/>
    <property type="match status" value="1"/>
</dbReference>
<dbReference type="InterPro" id="IPR011962">
    <property type="entry name" value="dCTP_deaminase"/>
</dbReference>
<dbReference type="InterPro" id="IPR036157">
    <property type="entry name" value="dUTPase-like_sf"/>
</dbReference>
<dbReference type="InterPro" id="IPR023537">
    <property type="entry name" value="dUTPase_archaeal"/>
</dbReference>
<dbReference type="InterPro" id="IPR033704">
    <property type="entry name" value="dUTPase_trimeric"/>
</dbReference>
<dbReference type="NCBIfam" id="NF002598">
    <property type="entry name" value="PRK02253.1"/>
    <property type="match status" value="1"/>
</dbReference>
<dbReference type="PANTHER" id="PTHR42680">
    <property type="entry name" value="DCTP DEAMINASE"/>
    <property type="match status" value="1"/>
</dbReference>
<dbReference type="PANTHER" id="PTHR42680:SF1">
    <property type="entry name" value="DEOXYURIDINE 5'-TRIPHOSPHATE NUCLEOTIDOHYDROLASE"/>
    <property type="match status" value="1"/>
</dbReference>
<dbReference type="Pfam" id="PF22769">
    <property type="entry name" value="DCD"/>
    <property type="match status" value="1"/>
</dbReference>
<dbReference type="SUPFAM" id="SSF51283">
    <property type="entry name" value="dUTPase-like"/>
    <property type="match status" value="1"/>
</dbReference>
<feature type="chain" id="PRO_0000153635" description="Probable deoxyuridine 5'-triphosphate nucleotidohydrolase">
    <location>
        <begin position="1"/>
        <end position="168"/>
    </location>
</feature>
<evidence type="ECO:0000255" key="1">
    <source>
        <dbReference type="HAMAP-Rule" id="MF_00635"/>
    </source>
</evidence>
<organism>
    <name type="scientific">Archaeoglobus fulgidus (strain ATCC 49558 / DSM 4304 / JCM 9628 / NBRC 100126 / VC-16)</name>
    <dbReference type="NCBI Taxonomy" id="224325"/>
    <lineage>
        <taxon>Archaea</taxon>
        <taxon>Methanobacteriati</taxon>
        <taxon>Methanobacteriota</taxon>
        <taxon>Archaeoglobi</taxon>
        <taxon>Archaeoglobales</taxon>
        <taxon>Archaeoglobaceae</taxon>
        <taxon>Archaeoglobus</taxon>
    </lineage>
</organism>
<name>DUT_ARCFU</name>